<reference key="1">
    <citation type="journal article" date="2005" name="Mol. Biol. Evol.">
        <title>Rapidly evolving genes of Drosophila: differing levels of selective pressure in testis, ovary, and head tissues between sibling species.</title>
        <authorList>
            <person name="Jagadeeshan S."/>
            <person name="Singh R.S."/>
        </authorList>
    </citation>
    <scope>NUCLEOTIDE SEQUENCE [MRNA]</scope>
    <source>
        <tissue>Testis</tissue>
    </source>
</reference>
<reference key="2">
    <citation type="submission" date="2005-05" db="EMBL/GenBank/DDBJ databases">
        <title>Cloning of Drosophila RIPalpha.</title>
        <authorList>
            <person name="Park J."/>
            <person name="Kim K."/>
            <person name="Lee J.H."/>
        </authorList>
    </citation>
    <scope>NUCLEOTIDE SEQUENCE [MRNA]</scope>
    <source>
        <strain>W1118</strain>
    </source>
</reference>
<reference key="3">
    <citation type="journal article" date="2000" name="Science">
        <title>The genome sequence of Drosophila melanogaster.</title>
        <authorList>
            <person name="Adams M.D."/>
            <person name="Celniker S.E."/>
            <person name="Holt R.A."/>
            <person name="Evans C.A."/>
            <person name="Gocayne J.D."/>
            <person name="Amanatides P.G."/>
            <person name="Scherer S.E."/>
            <person name="Li P.W."/>
            <person name="Hoskins R.A."/>
            <person name="Galle R.F."/>
            <person name="George R.A."/>
            <person name="Lewis S.E."/>
            <person name="Richards S."/>
            <person name="Ashburner M."/>
            <person name="Henderson S.N."/>
            <person name="Sutton G.G."/>
            <person name="Wortman J.R."/>
            <person name="Yandell M.D."/>
            <person name="Zhang Q."/>
            <person name="Chen L.X."/>
            <person name="Brandon R.C."/>
            <person name="Rogers Y.-H.C."/>
            <person name="Blazej R.G."/>
            <person name="Champe M."/>
            <person name="Pfeiffer B.D."/>
            <person name="Wan K.H."/>
            <person name="Doyle C."/>
            <person name="Baxter E.G."/>
            <person name="Helt G."/>
            <person name="Nelson C.R."/>
            <person name="Miklos G.L.G."/>
            <person name="Abril J.F."/>
            <person name="Agbayani A."/>
            <person name="An H.-J."/>
            <person name="Andrews-Pfannkoch C."/>
            <person name="Baldwin D."/>
            <person name="Ballew R.M."/>
            <person name="Basu A."/>
            <person name="Baxendale J."/>
            <person name="Bayraktaroglu L."/>
            <person name="Beasley E.M."/>
            <person name="Beeson K.Y."/>
            <person name="Benos P.V."/>
            <person name="Berman B.P."/>
            <person name="Bhandari D."/>
            <person name="Bolshakov S."/>
            <person name="Borkova D."/>
            <person name="Botchan M.R."/>
            <person name="Bouck J."/>
            <person name="Brokstein P."/>
            <person name="Brottier P."/>
            <person name="Burtis K.C."/>
            <person name="Busam D.A."/>
            <person name="Butler H."/>
            <person name="Cadieu E."/>
            <person name="Center A."/>
            <person name="Chandra I."/>
            <person name="Cherry J.M."/>
            <person name="Cawley S."/>
            <person name="Dahlke C."/>
            <person name="Davenport L.B."/>
            <person name="Davies P."/>
            <person name="de Pablos B."/>
            <person name="Delcher A."/>
            <person name="Deng Z."/>
            <person name="Mays A.D."/>
            <person name="Dew I."/>
            <person name="Dietz S.M."/>
            <person name="Dodson K."/>
            <person name="Doup L.E."/>
            <person name="Downes M."/>
            <person name="Dugan-Rocha S."/>
            <person name="Dunkov B.C."/>
            <person name="Dunn P."/>
            <person name="Durbin K.J."/>
            <person name="Evangelista C.C."/>
            <person name="Ferraz C."/>
            <person name="Ferriera S."/>
            <person name="Fleischmann W."/>
            <person name="Fosler C."/>
            <person name="Gabrielian A.E."/>
            <person name="Garg N.S."/>
            <person name="Gelbart W.M."/>
            <person name="Glasser K."/>
            <person name="Glodek A."/>
            <person name="Gong F."/>
            <person name="Gorrell J.H."/>
            <person name="Gu Z."/>
            <person name="Guan P."/>
            <person name="Harris M."/>
            <person name="Harris N.L."/>
            <person name="Harvey D.A."/>
            <person name="Heiman T.J."/>
            <person name="Hernandez J.R."/>
            <person name="Houck J."/>
            <person name="Hostin D."/>
            <person name="Houston K.A."/>
            <person name="Howland T.J."/>
            <person name="Wei M.-H."/>
            <person name="Ibegwam C."/>
            <person name="Jalali M."/>
            <person name="Kalush F."/>
            <person name="Karpen G.H."/>
            <person name="Ke Z."/>
            <person name="Kennison J.A."/>
            <person name="Ketchum K.A."/>
            <person name="Kimmel B.E."/>
            <person name="Kodira C.D."/>
            <person name="Kraft C.L."/>
            <person name="Kravitz S."/>
            <person name="Kulp D."/>
            <person name="Lai Z."/>
            <person name="Lasko P."/>
            <person name="Lei Y."/>
            <person name="Levitsky A.A."/>
            <person name="Li J.H."/>
            <person name="Li Z."/>
            <person name="Liang Y."/>
            <person name="Lin X."/>
            <person name="Liu X."/>
            <person name="Mattei B."/>
            <person name="McIntosh T.C."/>
            <person name="McLeod M.P."/>
            <person name="McPherson D."/>
            <person name="Merkulov G."/>
            <person name="Milshina N.V."/>
            <person name="Mobarry C."/>
            <person name="Morris J."/>
            <person name="Moshrefi A."/>
            <person name="Mount S.M."/>
            <person name="Moy M."/>
            <person name="Murphy B."/>
            <person name="Murphy L."/>
            <person name="Muzny D.M."/>
            <person name="Nelson D.L."/>
            <person name="Nelson D.R."/>
            <person name="Nelson K.A."/>
            <person name="Nixon K."/>
            <person name="Nusskern D.R."/>
            <person name="Pacleb J.M."/>
            <person name="Palazzolo M."/>
            <person name="Pittman G.S."/>
            <person name="Pan S."/>
            <person name="Pollard J."/>
            <person name="Puri V."/>
            <person name="Reese M.G."/>
            <person name="Reinert K."/>
            <person name="Remington K."/>
            <person name="Saunders R.D.C."/>
            <person name="Scheeler F."/>
            <person name="Shen H."/>
            <person name="Shue B.C."/>
            <person name="Siden-Kiamos I."/>
            <person name="Simpson M."/>
            <person name="Skupski M.P."/>
            <person name="Smith T.J."/>
            <person name="Spier E."/>
            <person name="Spradling A.C."/>
            <person name="Stapleton M."/>
            <person name="Strong R."/>
            <person name="Sun E."/>
            <person name="Svirskas R."/>
            <person name="Tector C."/>
            <person name="Turner R."/>
            <person name="Venter E."/>
            <person name="Wang A.H."/>
            <person name="Wang X."/>
            <person name="Wang Z.-Y."/>
            <person name="Wassarman D.A."/>
            <person name="Weinstock G.M."/>
            <person name="Weissenbach J."/>
            <person name="Williams S.M."/>
            <person name="Woodage T."/>
            <person name="Worley K.C."/>
            <person name="Wu D."/>
            <person name="Yang S."/>
            <person name="Yao Q.A."/>
            <person name="Ye J."/>
            <person name="Yeh R.-F."/>
            <person name="Zaveri J.S."/>
            <person name="Zhan M."/>
            <person name="Zhang G."/>
            <person name="Zhao Q."/>
            <person name="Zheng L."/>
            <person name="Zheng X.H."/>
            <person name="Zhong F.N."/>
            <person name="Zhong W."/>
            <person name="Zhou X."/>
            <person name="Zhu S.C."/>
            <person name="Zhu X."/>
            <person name="Smith H.O."/>
            <person name="Gibbs R.A."/>
            <person name="Myers E.W."/>
            <person name="Rubin G.M."/>
            <person name="Venter J.C."/>
        </authorList>
    </citation>
    <scope>NUCLEOTIDE SEQUENCE [LARGE SCALE GENOMIC DNA]</scope>
    <source>
        <strain>Berkeley</strain>
    </source>
</reference>
<reference key="4">
    <citation type="journal article" date="2002" name="Genome Biol.">
        <title>Annotation of the Drosophila melanogaster euchromatic genome: a systematic review.</title>
        <authorList>
            <person name="Misra S."/>
            <person name="Crosby M.A."/>
            <person name="Mungall C.J."/>
            <person name="Matthews B.B."/>
            <person name="Campbell K.S."/>
            <person name="Hradecky P."/>
            <person name="Huang Y."/>
            <person name="Kaminker J.S."/>
            <person name="Millburn G.H."/>
            <person name="Prochnik S.E."/>
            <person name="Smith C.D."/>
            <person name="Tupy J.L."/>
            <person name="Whitfield E.J."/>
            <person name="Bayraktaroglu L."/>
            <person name="Berman B.P."/>
            <person name="Bettencourt B.R."/>
            <person name="Celniker S.E."/>
            <person name="de Grey A.D.N.J."/>
            <person name="Drysdale R.A."/>
            <person name="Harris N.L."/>
            <person name="Richter J."/>
            <person name="Russo S."/>
            <person name="Schroeder A.J."/>
            <person name="Shu S.Q."/>
            <person name="Stapleton M."/>
            <person name="Yamada C."/>
            <person name="Ashburner M."/>
            <person name="Gelbart W.M."/>
            <person name="Rubin G.M."/>
            <person name="Lewis S.E."/>
        </authorList>
    </citation>
    <scope>GENOME REANNOTATION</scope>
    <source>
        <strain>Berkeley</strain>
    </source>
</reference>
<reference key="5">
    <citation type="journal article" date="2002" name="Genome Biol.">
        <title>A Drosophila full-length cDNA resource.</title>
        <authorList>
            <person name="Stapleton M."/>
            <person name="Carlson J.W."/>
            <person name="Brokstein P."/>
            <person name="Yu C."/>
            <person name="Champe M."/>
            <person name="George R.A."/>
            <person name="Guarin H."/>
            <person name="Kronmiller B."/>
            <person name="Pacleb J.M."/>
            <person name="Park S."/>
            <person name="Wan K.H."/>
            <person name="Rubin G.M."/>
            <person name="Celniker S.E."/>
        </authorList>
    </citation>
    <scope>NUCLEOTIDE SEQUENCE [LARGE SCALE MRNA]</scope>
    <source>
        <strain>Berkeley</strain>
        <tissue>Embryo</tissue>
    </source>
</reference>
<protein>
    <recommendedName>
        <fullName>RIP-like protein</fullName>
    </recommendedName>
    <alternativeName>
        <fullName>RIP-alpha</fullName>
    </alternativeName>
</protein>
<keyword id="KW-0479">Metal-binding</keyword>
<keyword id="KW-1185">Reference proteome</keyword>
<keyword id="KW-0862">Zinc</keyword>
<keyword id="KW-0863">Zinc-finger</keyword>
<name>RIP_DROME</name>
<gene>
    <name type="primary">Ripalpha</name>
    <name type="ORF">CG18145</name>
</gene>
<sequence>MNSTQSPVYRTSVEQKRHAQEVAKRQRMGNQMPRLREMLREKYRKRIIETRNRCTDAQREIQLSELREILRLELSELEKDVELEELILEELLSDVNEWYALGEKNLETLYAEPDEQQKEVLCPVCQIKNLRHHKGAFICECGIRFEHSANMEQLQILLQQQIASHELQCTQALRFFIEPASGQLYDMCGSCDYFSSV</sequence>
<evidence type="ECO:0000256" key="1">
    <source>
        <dbReference type="SAM" id="MobiDB-lite"/>
    </source>
</evidence>
<feature type="chain" id="PRO_0000076304" description="RIP-like protein">
    <location>
        <begin position="1"/>
        <end position="197"/>
    </location>
</feature>
<feature type="zinc finger region" description="RIP-type">
    <location>
        <begin position="122"/>
        <end position="191"/>
    </location>
</feature>
<feature type="region of interest" description="Disordered" evidence="1">
    <location>
        <begin position="1"/>
        <end position="20"/>
    </location>
</feature>
<organism>
    <name type="scientific">Drosophila melanogaster</name>
    <name type="common">Fruit fly</name>
    <dbReference type="NCBI Taxonomy" id="7227"/>
    <lineage>
        <taxon>Eukaryota</taxon>
        <taxon>Metazoa</taxon>
        <taxon>Ecdysozoa</taxon>
        <taxon>Arthropoda</taxon>
        <taxon>Hexapoda</taxon>
        <taxon>Insecta</taxon>
        <taxon>Pterygota</taxon>
        <taxon>Neoptera</taxon>
        <taxon>Endopterygota</taxon>
        <taxon>Diptera</taxon>
        <taxon>Brachycera</taxon>
        <taxon>Muscomorpha</taxon>
        <taxon>Ephydroidea</taxon>
        <taxon>Drosophilidae</taxon>
        <taxon>Drosophila</taxon>
        <taxon>Sophophora</taxon>
    </lineage>
</organism>
<proteinExistence type="evidence at transcript level"/>
<accession>Q9VL31</accession>
<accession>Q4PKP8</accession>
<dbReference type="EMBL" id="DQ062806">
    <property type="protein sequence ID" value="AAY56679.1"/>
    <property type="molecule type" value="mRNA"/>
</dbReference>
<dbReference type="EMBL" id="DQ072161">
    <property type="protein sequence ID" value="AAY82588.1"/>
    <property type="molecule type" value="mRNA"/>
</dbReference>
<dbReference type="EMBL" id="AE014134">
    <property type="protein sequence ID" value="AAF52867.1"/>
    <property type="molecule type" value="Genomic_DNA"/>
</dbReference>
<dbReference type="EMBL" id="AY089598">
    <property type="protein sequence ID" value="AAL90336.1"/>
    <property type="molecule type" value="mRNA"/>
</dbReference>
<dbReference type="RefSeq" id="NP_609351.1">
    <property type="nucleotide sequence ID" value="NM_135507.3"/>
</dbReference>
<dbReference type="SMR" id="Q9VL31"/>
<dbReference type="BioGRID" id="60442">
    <property type="interactions" value="3"/>
</dbReference>
<dbReference type="FunCoup" id="Q9VL31">
    <property type="interactions" value="1098"/>
</dbReference>
<dbReference type="IntAct" id="Q9VL31">
    <property type="interactions" value="1"/>
</dbReference>
<dbReference type="STRING" id="7227.FBpp0079552"/>
<dbReference type="PaxDb" id="7227-FBpp0079552"/>
<dbReference type="DNASU" id="34351"/>
<dbReference type="EnsemblMetazoa" id="FBtr0079962">
    <property type="protein sequence ID" value="FBpp0079552"/>
    <property type="gene ID" value="FBgn0032189"/>
</dbReference>
<dbReference type="GeneID" id="34351"/>
<dbReference type="KEGG" id="dme:Dmel_CG18145"/>
<dbReference type="AGR" id="FB:FBgn0032189"/>
<dbReference type="CTD" id="34351"/>
<dbReference type="FlyBase" id="FBgn0032189">
    <property type="gene designation" value="Ripalpha"/>
</dbReference>
<dbReference type="VEuPathDB" id="VectorBase:FBgn0032189"/>
<dbReference type="eggNOG" id="ENOG502TA4P">
    <property type="taxonomic scope" value="Eukaryota"/>
</dbReference>
<dbReference type="GeneTree" id="ENSGT00390000006416"/>
<dbReference type="HOGENOM" id="CLU_1373525_0_0_1"/>
<dbReference type="InParanoid" id="Q9VL31"/>
<dbReference type="OMA" id="GSCDYFS"/>
<dbReference type="OrthoDB" id="435311at2759"/>
<dbReference type="PhylomeDB" id="Q9VL31"/>
<dbReference type="BioGRID-ORCS" id="34351">
    <property type="hits" value="1 hit in 1 CRISPR screen"/>
</dbReference>
<dbReference type="GenomeRNAi" id="34351"/>
<dbReference type="PRO" id="PR:Q9VL31"/>
<dbReference type="Proteomes" id="UP000000803">
    <property type="component" value="Chromosome 2L"/>
</dbReference>
<dbReference type="Bgee" id="FBgn0032189">
    <property type="expression patterns" value="Expressed in muscle cell in open tracheal system trachea and 124 other cell types or tissues"/>
</dbReference>
<dbReference type="GO" id="GO:0005634">
    <property type="term" value="C:nucleus"/>
    <property type="evidence" value="ECO:0000318"/>
    <property type="project" value="GO_Central"/>
</dbReference>
<dbReference type="GO" id="GO:0008270">
    <property type="term" value="F:zinc ion binding"/>
    <property type="evidence" value="ECO:0007669"/>
    <property type="project" value="UniProtKB-KW"/>
</dbReference>
<dbReference type="GO" id="GO:0006606">
    <property type="term" value="P:protein import into nucleus"/>
    <property type="evidence" value="ECO:0000318"/>
    <property type="project" value="GO_Central"/>
</dbReference>
<dbReference type="InterPro" id="IPR028156">
    <property type="entry name" value="RIP"/>
</dbReference>
<dbReference type="InterPro" id="IPR028159">
    <property type="entry name" value="RPA_interact_C_dom"/>
</dbReference>
<dbReference type="PANTHER" id="PTHR31742:SF1">
    <property type="entry name" value="RPA-INTERACTING PROTEIN"/>
    <property type="match status" value="1"/>
</dbReference>
<dbReference type="PANTHER" id="PTHR31742">
    <property type="entry name" value="RPA-INTERACTING PROTEIN RPAIN"/>
    <property type="match status" value="1"/>
</dbReference>
<dbReference type="Pfam" id="PF14768">
    <property type="entry name" value="RPA_interact_C"/>
    <property type="match status" value="1"/>
</dbReference>